<organism>
    <name type="scientific">Drosophila melanogaster</name>
    <name type="common">Fruit fly</name>
    <dbReference type="NCBI Taxonomy" id="7227"/>
    <lineage>
        <taxon>Eukaryota</taxon>
        <taxon>Metazoa</taxon>
        <taxon>Ecdysozoa</taxon>
        <taxon>Arthropoda</taxon>
        <taxon>Hexapoda</taxon>
        <taxon>Insecta</taxon>
        <taxon>Pterygota</taxon>
        <taxon>Neoptera</taxon>
        <taxon>Endopterygota</taxon>
        <taxon>Diptera</taxon>
        <taxon>Brachycera</taxon>
        <taxon>Muscomorpha</taxon>
        <taxon>Ephydroidea</taxon>
        <taxon>Drosophilidae</taxon>
        <taxon>Drosophila</taxon>
        <taxon>Sophophora</taxon>
    </lineage>
</organism>
<feature type="signal peptide" description="Or 27" evidence="2">
    <location>
        <begin position="1"/>
        <end position="20"/>
    </location>
</feature>
<feature type="chain" id="PRO_0000000454" description="Gamma-aminobutyric acid receptor subunit beta-like">
    <location>
        <begin position="21"/>
        <end position="496"/>
    </location>
</feature>
<feature type="topological domain" description="Extracellular" evidence="2">
    <location>
        <begin position="21"/>
        <end position="258"/>
    </location>
</feature>
<feature type="transmembrane region" description="Helical" evidence="2">
    <location>
        <begin position="259"/>
        <end position="280"/>
    </location>
</feature>
<feature type="transmembrane region" description="Helical" evidence="2">
    <location>
        <begin position="285"/>
        <end position="306"/>
    </location>
</feature>
<feature type="transmembrane region" description="Helical" evidence="2">
    <location>
        <begin position="318"/>
        <end position="342"/>
    </location>
</feature>
<feature type="topological domain" description="Cytoplasmic" evidence="2">
    <location>
        <begin position="343"/>
        <end position="472"/>
    </location>
</feature>
<feature type="transmembrane region" description="Helical" evidence="2">
    <location>
        <begin position="473"/>
        <end position="494"/>
    </location>
</feature>
<feature type="glycosylation site" description="N-linked (GlcNAc...) asparagine" evidence="2">
    <location>
        <position position="39"/>
    </location>
</feature>
<feature type="glycosylation site" description="N-linked (GlcNAc...) asparagine" evidence="2">
    <location>
        <position position="189"/>
    </location>
</feature>
<feature type="disulfide bond" evidence="1">
    <location>
        <begin position="176"/>
        <end position="190"/>
    </location>
</feature>
<feature type="sequence conflict" description="In Ref. 1; AAA28559/AAB27090." evidence="4" ref="1">
    <original>G</original>
    <variation>S</variation>
    <location>
        <position position="12"/>
    </location>
</feature>
<feature type="sequence conflict" description="In Ref. 5; no nucleotide entry." evidence="4" ref="5">
    <original>V</original>
    <variation>C</variation>
    <location>
        <position position="324"/>
    </location>
</feature>
<accession>Q08832</accession>
<accession>A4V4J6</accession>
<accession>Q9TX49</accession>
<accession>Q9VXL8</accession>
<protein>
    <recommendedName>
        <fullName>Gamma-aminobutyric acid receptor subunit beta-like</fullName>
    </recommendedName>
    <alternativeName>
        <fullName>GABA(A) receptor</fullName>
    </alternativeName>
</protein>
<proteinExistence type="evidence at protein level"/>
<gene>
    <name type="primary">Lcch3</name>
    <name type="ORF">CG17336</name>
</gene>
<dbReference type="EMBL" id="L17436">
    <property type="protein sequence ID" value="AAA28559.1"/>
    <property type="molecule type" value="mRNA"/>
</dbReference>
<dbReference type="EMBL" id="S62717">
    <property type="protein sequence ID" value="AAB27090.1"/>
    <property type="molecule type" value="mRNA"/>
</dbReference>
<dbReference type="EMBL" id="AE014298">
    <property type="protein sequence ID" value="AAS65370.1"/>
    <property type="molecule type" value="Genomic_DNA"/>
</dbReference>
<dbReference type="EMBL" id="AY060660">
    <property type="protein sequence ID" value="AAL28208.1"/>
    <property type="molecule type" value="mRNA"/>
</dbReference>
<dbReference type="PIR" id="JN0603">
    <property type="entry name" value="JN0603"/>
</dbReference>
<dbReference type="RefSeq" id="NP_996469.1">
    <property type="nucleotide sequence ID" value="NM_206746.2"/>
</dbReference>
<dbReference type="SMR" id="Q08832"/>
<dbReference type="FunCoup" id="Q08832">
    <property type="interactions" value="246"/>
</dbReference>
<dbReference type="STRING" id="7227.FBpp0089263"/>
<dbReference type="TCDB" id="1.A.9.5.6">
    <property type="family name" value="the neurotransmitter receptor, cys loop, ligand-gated ion channel (lic) family"/>
</dbReference>
<dbReference type="GlyCosmos" id="Q08832">
    <property type="glycosylation" value="2 sites, No reported glycans"/>
</dbReference>
<dbReference type="GlyGen" id="Q08832">
    <property type="glycosylation" value="2 sites"/>
</dbReference>
<dbReference type="PaxDb" id="7227-FBpp0089263"/>
<dbReference type="DNASU" id="32554"/>
<dbReference type="EnsemblMetazoa" id="FBtr0074129">
    <property type="protein sequence ID" value="FBpp0089263"/>
    <property type="gene ID" value="FBgn0010240"/>
</dbReference>
<dbReference type="GeneID" id="32554"/>
<dbReference type="KEGG" id="dme:Dmel_CG17336"/>
<dbReference type="AGR" id="FB:FBgn0010240"/>
<dbReference type="CTD" id="32554"/>
<dbReference type="FlyBase" id="FBgn0010240">
    <property type="gene designation" value="Lcch3"/>
</dbReference>
<dbReference type="VEuPathDB" id="VectorBase:FBgn0010240"/>
<dbReference type="eggNOG" id="KOG3643">
    <property type="taxonomic scope" value="Eukaryota"/>
</dbReference>
<dbReference type="GeneTree" id="ENSGT00940000166778"/>
<dbReference type="HOGENOM" id="CLU_010920_0_0_1"/>
<dbReference type="InParanoid" id="Q08832"/>
<dbReference type="OMA" id="LVINMSM"/>
<dbReference type="OrthoDB" id="8890589at2759"/>
<dbReference type="PhylomeDB" id="Q08832"/>
<dbReference type="Reactome" id="R-DME-977443">
    <property type="pathway name" value="GABA receptor activation"/>
</dbReference>
<dbReference type="BioGRID-ORCS" id="32554">
    <property type="hits" value="0 hits in 3 CRISPR screens"/>
</dbReference>
<dbReference type="ChiTaRS" id="Lcch3">
    <property type="organism name" value="fly"/>
</dbReference>
<dbReference type="GenomeRNAi" id="32554"/>
<dbReference type="PRO" id="PR:Q08832"/>
<dbReference type="Proteomes" id="UP000000803">
    <property type="component" value="Chromosome X"/>
</dbReference>
<dbReference type="Bgee" id="FBgn0010240">
    <property type="expression patterns" value="Expressed in distal medullary amacrine neuron Dm11 in insect head and 103 other cell types or tissues"/>
</dbReference>
<dbReference type="ExpressionAtlas" id="Q08832">
    <property type="expression patterns" value="baseline and differential"/>
</dbReference>
<dbReference type="GO" id="GO:0034707">
    <property type="term" value="C:chloride channel complex"/>
    <property type="evidence" value="ECO:0007669"/>
    <property type="project" value="UniProtKB-KW"/>
</dbReference>
<dbReference type="GO" id="GO:1902711">
    <property type="term" value="C:GABA-A receptor complex"/>
    <property type="evidence" value="ECO:0000318"/>
    <property type="project" value="GO_Central"/>
</dbReference>
<dbReference type="GO" id="GO:0005886">
    <property type="term" value="C:plasma membrane"/>
    <property type="evidence" value="ECO:0000314"/>
    <property type="project" value="FlyBase"/>
</dbReference>
<dbReference type="GO" id="GO:0045211">
    <property type="term" value="C:postsynaptic membrane"/>
    <property type="evidence" value="ECO:0007669"/>
    <property type="project" value="UniProtKB-SubCell"/>
</dbReference>
<dbReference type="GO" id="GO:0004890">
    <property type="term" value="F:GABA-A receptor activity"/>
    <property type="evidence" value="ECO:0000318"/>
    <property type="project" value="GO_Central"/>
</dbReference>
<dbReference type="GO" id="GO:0022851">
    <property type="term" value="F:GABA-gated chloride ion channel activity"/>
    <property type="evidence" value="ECO:0000314"/>
    <property type="project" value="FlyBase"/>
</dbReference>
<dbReference type="GO" id="GO:1902476">
    <property type="term" value="P:chloride transmembrane transport"/>
    <property type="evidence" value="ECO:0000318"/>
    <property type="project" value="GO_Central"/>
</dbReference>
<dbReference type="CDD" id="cd19006">
    <property type="entry name" value="LGIC_ECD_GABAAR_LCCH3-like"/>
    <property type="match status" value="1"/>
</dbReference>
<dbReference type="CDD" id="cd19049">
    <property type="entry name" value="LGIC_TM_anion"/>
    <property type="match status" value="1"/>
</dbReference>
<dbReference type="FunFam" id="1.20.58.390:FF:000040">
    <property type="entry name" value="Gamma-aminobutyric acid receptor subunit beta-like"/>
    <property type="match status" value="1"/>
</dbReference>
<dbReference type="FunFam" id="2.70.170.10:FF:000036">
    <property type="entry name" value="Gamma-aminobutyric acid receptor subunit beta-like"/>
    <property type="match status" value="1"/>
</dbReference>
<dbReference type="Gene3D" id="2.70.170.10">
    <property type="entry name" value="Neurotransmitter-gated ion-channel ligand-binding domain"/>
    <property type="match status" value="1"/>
</dbReference>
<dbReference type="Gene3D" id="1.20.58.390">
    <property type="entry name" value="Neurotransmitter-gated ion-channel transmembrane domain"/>
    <property type="match status" value="1"/>
</dbReference>
<dbReference type="InterPro" id="IPR006028">
    <property type="entry name" value="GABAA/Glycine_rcpt"/>
</dbReference>
<dbReference type="InterPro" id="IPR002289">
    <property type="entry name" value="GABAAb_rcpt"/>
</dbReference>
<dbReference type="InterPro" id="IPR006202">
    <property type="entry name" value="Neur_chan_lig-bd"/>
</dbReference>
<dbReference type="InterPro" id="IPR036734">
    <property type="entry name" value="Neur_chan_lig-bd_sf"/>
</dbReference>
<dbReference type="InterPro" id="IPR006201">
    <property type="entry name" value="Neur_channel"/>
</dbReference>
<dbReference type="InterPro" id="IPR036719">
    <property type="entry name" value="Neuro-gated_channel_TM_sf"/>
</dbReference>
<dbReference type="InterPro" id="IPR038050">
    <property type="entry name" value="Neuro_actylchol_rec"/>
</dbReference>
<dbReference type="InterPro" id="IPR006029">
    <property type="entry name" value="Neurotrans-gated_channel_TM"/>
</dbReference>
<dbReference type="InterPro" id="IPR018000">
    <property type="entry name" value="Neurotransmitter_ion_chnl_CS"/>
</dbReference>
<dbReference type="NCBIfam" id="TIGR00860">
    <property type="entry name" value="LIC"/>
    <property type="match status" value="1"/>
</dbReference>
<dbReference type="PANTHER" id="PTHR18945">
    <property type="entry name" value="NEUROTRANSMITTER GATED ION CHANNEL"/>
    <property type="match status" value="1"/>
</dbReference>
<dbReference type="Pfam" id="PF02931">
    <property type="entry name" value="Neur_chan_LBD"/>
    <property type="match status" value="1"/>
</dbReference>
<dbReference type="Pfam" id="PF02932">
    <property type="entry name" value="Neur_chan_memb"/>
    <property type="match status" value="1"/>
</dbReference>
<dbReference type="PRINTS" id="PR01160">
    <property type="entry name" value="GABAARBETA"/>
</dbReference>
<dbReference type="PRINTS" id="PR00253">
    <property type="entry name" value="GABAARECEPTR"/>
</dbReference>
<dbReference type="PRINTS" id="PR00252">
    <property type="entry name" value="NRIONCHANNEL"/>
</dbReference>
<dbReference type="SUPFAM" id="SSF90112">
    <property type="entry name" value="Neurotransmitter-gated ion-channel transmembrane pore"/>
    <property type="match status" value="1"/>
</dbReference>
<dbReference type="SUPFAM" id="SSF63712">
    <property type="entry name" value="Nicotinic receptor ligand binding domain-like"/>
    <property type="match status" value="1"/>
</dbReference>
<dbReference type="PROSITE" id="PS00236">
    <property type="entry name" value="NEUROTR_ION_CHANNEL"/>
    <property type="match status" value="1"/>
</dbReference>
<evidence type="ECO:0000250" key="1"/>
<evidence type="ECO:0000255" key="2"/>
<evidence type="ECO:0000269" key="3">
    <source>
    </source>
</evidence>
<evidence type="ECO:0000305" key="4"/>
<keyword id="KW-1003">Cell membrane</keyword>
<keyword id="KW-0868">Chloride</keyword>
<keyword id="KW-0869">Chloride channel</keyword>
<keyword id="KW-1015">Disulfide bond</keyword>
<keyword id="KW-0325">Glycoprotein</keyword>
<keyword id="KW-0407">Ion channel</keyword>
<keyword id="KW-0406">Ion transport</keyword>
<keyword id="KW-1071">Ligand-gated ion channel</keyword>
<keyword id="KW-0472">Membrane</keyword>
<keyword id="KW-0628">Postsynaptic cell membrane</keyword>
<keyword id="KW-0675">Receptor</keyword>
<keyword id="KW-1185">Reference proteome</keyword>
<keyword id="KW-0732">Signal</keyword>
<keyword id="KW-0770">Synapse</keyword>
<keyword id="KW-0812">Transmembrane</keyword>
<keyword id="KW-1133">Transmembrane helix</keyword>
<keyword id="KW-0813">Transport</keyword>
<sequence>MTCFTRVGVSCGLFFFLLGAQLQLIRCIRKDVLAGRLENVTQTISNILQGYDIRLRPNFGGEPLHVGMDLTIASFDAISEVNMDYTITMYLNQYWRDERLAFNIFGQYFDDENDDGISDVLTLSGDFAEKIWVPDTFFANDKNSFLHDVTERNKLVRLGGDGAVTYGMRFTTTLACMMDLHYYPLDSQNCTVEIESYGYTVSDVVMYWKPTPVRGVEDAELPQFTIIGYETNDRKERLATGVYQRLSLSFKLQRNIGYFVFQTYLPSILIVMLSWVSFWINHEATSARVALGITTVLTMTTISTGVRSSLPRISYVKAIDIYLVMCFVFVFAALLEYAAVNYTYWGKRAKKKIKKVKECCPGKIGKSERSETCSTTEDIIELQDVRMSPIPSLRRGTYNATLDSIGTETMNLGKFPPSFRITRNYGTGHSQLRRRAQRGISTRPRMLHALKRGASAIKATIPKIKDVNIIDKYSRMIFPISFLAFNLGYWLFYILE</sequence>
<comment type="function">
    <text evidence="3">GABA, an inhibitory neurotransmitter, mediates neuronal inhibition by binding to the GABA receptor and opening an integral chloride channel. Combines with the ligand-gated ion channel subunit GRD to form cation-selective GABA-gated ion channels when coexpressed in Xenopus laevis oocytes.</text>
</comment>
<comment type="subunit">
    <text evidence="3">Generally pentameric. There are five types of GABA(A) receptor chains: alpha, beta, gamma, delta, and rho. Interacts with Grd (alpha chain).</text>
</comment>
<comment type="subcellular location">
    <subcellularLocation>
        <location>Postsynaptic cell membrane</location>
        <topology>Multi-pass membrane protein</topology>
    </subcellularLocation>
    <subcellularLocation>
        <location>Cell membrane</location>
        <topology>Multi-pass membrane protein</topology>
    </subcellularLocation>
</comment>
<comment type="similarity">
    <text evidence="4">Belongs to the ligand-gated ion channel (TC 1.A.9) family. Gamma-aminobutyric acid receptor (TC 1.A.9.5) subfamily.</text>
</comment>
<reference key="1">
    <citation type="journal article" date="1993" name="Biochem. Biophys. Res. Commun.">
        <title>Characterization of a putative gamma-aminobutyric acid (GABA) receptor beta subunit gene from Drosophila melanogaster.</title>
        <authorList>
            <person name="Henderson J.E."/>
            <person name="Soderlund D.M."/>
            <person name="Knipple D.C."/>
        </authorList>
    </citation>
    <scope>NUCLEOTIDE SEQUENCE [MRNA]</scope>
    <source>
        <strain>Canton-S</strain>
        <tissue>Pupae</tissue>
    </source>
</reference>
<reference key="2">
    <citation type="journal article" date="2000" name="Science">
        <title>The genome sequence of Drosophila melanogaster.</title>
        <authorList>
            <person name="Adams M.D."/>
            <person name="Celniker S.E."/>
            <person name="Holt R.A."/>
            <person name="Evans C.A."/>
            <person name="Gocayne J.D."/>
            <person name="Amanatides P.G."/>
            <person name="Scherer S.E."/>
            <person name="Li P.W."/>
            <person name="Hoskins R.A."/>
            <person name="Galle R.F."/>
            <person name="George R.A."/>
            <person name="Lewis S.E."/>
            <person name="Richards S."/>
            <person name="Ashburner M."/>
            <person name="Henderson S.N."/>
            <person name="Sutton G.G."/>
            <person name="Wortman J.R."/>
            <person name="Yandell M.D."/>
            <person name="Zhang Q."/>
            <person name="Chen L.X."/>
            <person name="Brandon R.C."/>
            <person name="Rogers Y.-H.C."/>
            <person name="Blazej R.G."/>
            <person name="Champe M."/>
            <person name="Pfeiffer B.D."/>
            <person name="Wan K.H."/>
            <person name="Doyle C."/>
            <person name="Baxter E.G."/>
            <person name="Helt G."/>
            <person name="Nelson C.R."/>
            <person name="Miklos G.L.G."/>
            <person name="Abril J.F."/>
            <person name="Agbayani A."/>
            <person name="An H.-J."/>
            <person name="Andrews-Pfannkoch C."/>
            <person name="Baldwin D."/>
            <person name="Ballew R.M."/>
            <person name="Basu A."/>
            <person name="Baxendale J."/>
            <person name="Bayraktaroglu L."/>
            <person name="Beasley E.M."/>
            <person name="Beeson K.Y."/>
            <person name="Benos P.V."/>
            <person name="Berman B.P."/>
            <person name="Bhandari D."/>
            <person name="Bolshakov S."/>
            <person name="Borkova D."/>
            <person name="Botchan M.R."/>
            <person name="Bouck J."/>
            <person name="Brokstein P."/>
            <person name="Brottier P."/>
            <person name="Burtis K.C."/>
            <person name="Busam D.A."/>
            <person name="Butler H."/>
            <person name="Cadieu E."/>
            <person name="Center A."/>
            <person name="Chandra I."/>
            <person name="Cherry J.M."/>
            <person name="Cawley S."/>
            <person name="Dahlke C."/>
            <person name="Davenport L.B."/>
            <person name="Davies P."/>
            <person name="de Pablos B."/>
            <person name="Delcher A."/>
            <person name="Deng Z."/>
            <person name="Mays A.D."/>
            <person name="Dew I."/>
            <person name="Dietz S.M."/>
            <person name="Dodson K."/>
            <person name="Doup L.E."/>
            <person name="Downes M."/>
            <person name="Dugan-Rocha S."/>
            <person name="Dunkov B.C."/>
            <person name="Dunn P."/>
            <person name="Durbin K.J."/>
            <person name="Evangelista C.C."/>
            <person name="Ferraz C."/>
            <person name="Ferriera S."/>
            <person name="Fleischmann W."/>
            <person name="Fosler C."/>
            <person name="Gabrielian A.E."/>
            <person name="Garg N.S."/>
            <person name="Gelbart W.M."/>
            <person name="Glasser K."/>
            <person name="Glodek A."/>
            <person name="Gong F."/>
            <person name="Gorrell J.H."/>
            <person name="Gu Z."/>
            <person name="Guan P."/>
            <person name="Harris M."/>
            <person name="Harris N.L."/>
            <person name="Harvey D.A."/>
            <person name="Heiman T.J."/>
            <person name="Hernandez J.R."/>
            <person name="Houck J."/>
            <person name="Hostin D."/>
            <person name="Houston K.A."/>
            <person name="Howland T.J."/>
            <person name="Wei M.-H."/>
            <person name="Ibegwam C."/>
            <person name="Jalali M."/>
            <person name="Kalush F."/>
            <person name="Karpen G.H."/>
            <person name="Ke Z."/>
            <person name="Kennison J.A."/>
            <person name="Ketchum K.A."/>
            <person name="Kimmel B.E."/>
            <person name="Kodira C.D."/>
            <person name="Kraft C.L."/>
            <person name="Kravitz S."/>
            <person name="Kulp D."/>
            <person name="Lai Z."/>
            <person name="Lasko P."/>
            <person name="Lei Y."/>
            <person name="Levitsky A.A."/>
            <person name="Li J.H."/>
            <person name="Li Z."/>
            <person name="Liang Y."/>
            <person name="Lin X."/>
            <person name="Liu X."/>
            <person name="Mattei B."/>
            <person name="McIntosh T.C."/>
            <person name="McLeod M.P."/>
            <person name="McPherson D."/>
            <person name="Merkulov G."/>
            <person name="Milshina N.V."/>
            <person name="Mobarry C."/>
            <person name="Morris J."/>
            <person name="Moshrefi A."/>
            <person name="Mount S.M."/>
            <person name="Moy M."/>
            <person name="Murphy B."/>
            <person name="Murphy L."/>
            <person name="Muzny D.M."/>
            <person name="Nelson D.L."/>
            <person name="Nelson D.R."/>
            <person name="Nelson K.A."/>
            <person name="Nixon K."/>
            <person name="Nusskern D.R."/>
            <person name="Pacleb J.M."/>
            <person name="Palazzolo M."/>
            <person name="Pittman G.S."/>
            <person name="Pan S."/>
            <person name="Pollard J."/>
            <person name="Puri V."/>
            <person name="Reese M.G."/>
            <person name="Reinert K."/>
            <person name="Remington K."/>
            <person name="Saunders R.D.C."/>
            <person name="Scheeler F."/>
            <person name="Shen H."/>
            <person name="Shue B.C."/>
            <person name="Siden-Kiamos I."/>
            <person name="Simpson M."/>
            <person name="Skupski M.P."/>
            <person name="Smith T.J."/>
            <person name="Spier E."/>
            <person name="Spradling A.C."/>
            <person name="Stapleton M."/>
            <person name="Strong R."/>
            <person name="Sun E."/>
            <person name="Svirskas R."/>
            <person name="Tector C."/>
            <person name="Turner R."/>
            <person name="Venter E."/>
            <person name="Wang A.H."/>
            <person name="Wang X."/>
            <person name="Wang Z.-Y."/>
            <person name="Wassarman D.A."/>
            <person name="Weinstock G.M."/>
            <person name="Weissenbach J."/>
            <person name="Williams S.M."/>
            <person name="Woodage T."/>
            <person name="Worley K.C."/>
            <person name="Wu D."/>
            <person name="Yang S."/>
            <person name="Yao Q.A."/>
            <person name="Ye J."/>
            <person name="Yeh R.-F."/>
            <person name="Zaveri J.S."/>
            <person name="Zhan M."/>
            <person name="Zhang G."/>
            <person name="Zhao Q."/>
            <person name="Zheng L."/>
            <person name="Zheng X.H."/>
            <person name="Zhong F.N."/>
            <person name="Zhong W."/>
            <person name="Zhou X."/>
            <person name="Zhu S.C."/>
            <person name="Zhu X."/>
            <person name="Smith H.O."/>
            <person name="Gibbs R.A."/>
            <person name="Myers E.W."/>
            <person name="Rubin G.M."/>
            <person name="Venter J.C."/>
        </authorList>
    </citation>
    <scope>NUCLEOTIDE SEQUENCE [LARGE SCALE GENOMIC DNA]</scope>
    <source>
        <strain>Berkeley</strain>
    </source>
</reference>
<reference key="3">
    <citation type="journal article" date="2002" name="Genome Biol.">
        <title>Annotation of the Drosophila melanogaster euchromatic genome: a systematic review.</title>
        <authorList>
            <person name="Misra S."/>
            <person name="Crosby M.A."/>
            <person name="Mungall C.J."/>
            <person name="Matthews B.B."/>
            <person name="Campbell K.S."/>
            <person name="Hradecky P."/>
            <person name="Huang Y."/>
            <person name="Kaminker J.S."/>
            <person name="Millburn G.H."/>
            <person name="Prochnik S.E."/>
            <person name="Smith C.D."/>
            <person name="Tupy J.L."/>
            <person name="Whitfield E.J."/>
            <person name="Bayraktaroglu L."/>
            <person name="Berman B.P."/>
            <person name="Bettencourt B.R."/>
            <person name="Celniker S.E."/>
            <person name="de Grey A.D.N.J."/>
            <person name="Drysdale R.A."/>
            <person name="Harris N.L."/>
            <person name="Richter J."/>
            <person name="Russo S."/>
            <person name="Schroeder A.J."/>
            <person name="Shu S.Q."/>
            <person name="Stapleton M."/>
            <person name="Yamada C."/>
            <person name="Ashburner M."/>
            <person name="Gelbart W.M."/>
            <person name="Rubin G.M."/>
            <person name="Lewis S.E."/>
        </authorList>
    </citation>
    <scope>GENOME REANNOTATION</scope>
    <source>
        <strain>Berkeley</strain>
    </source>
</reference>
<reference key="4">
    <citation type="journal article" date="2002" name="Genome Biol.">
        <title>A Drosophila full-length cDNA resource.</title>
        <authorList>
            <person name="Stapleton M."/>
            <person name="Carlson J.W."/>
            <person name="Brokstein P."/>
            <person name="Yu C."/>
            <person name="Champe M."/>
            <person name="George R.A."/>
            <person name="Guarin H."/>
            <person name="Kronmiller B."/>
            <person name="Pacleb J.M."/>
            <person name="Park S."/>
            <person name="Wan K.H."/>
            <person name="Rubin G.M."/>
            <person name="Celniker S.E."/>
        </authorList>
    </citation>
    <scope>NUCLEOTIDE SEQUENCE [LARGE SCALE MRNA]</scope>
    <source>
        <strain>Berkeley</strain>
        <tissue>Head</tissue>
    </source>
</reference>
<reference key="5">
    <citation type="journal article" date="1994" name="Insect Biochem. Mol. Biol.">
        <title>PCR-based homology probing reveals a family of GABA receptor-like genes in Drosophila melanogaster.</title>
        <authorList>
            <person name="Henderson J.E."/>
            <person name="Knipple D.C."/>
            <person name="Soderlund D.M."/>
        </authorList>
    </citation>
    <scope>NUCLEOTIDE SEQUENCE [GENOMIC DNA] OF 284-340</scope>
    <source>
        <strain>Canton-S</strain>
    </source>
</reference>
<reference key="6">
    <citation type="journal article" date="2004" name="Br. J. Pharmacol.">
        <title>Drosophila melanogaster GRD and LCCH3 subunits form heteromultimeric GABA-gated cation channels.</title>
        <authorList>
            <person name="Gisselmann G."/>
            <person name="Plonka J."/>
            <person name="Pusch H."/>
            <person name="Hatt H."/>
        </authorList>
    </citation>
    <scope>FUNCTION</scope>
    <scope>INTERACTION WITH GRD</scope>
</reference>
<name>GBRB3_DROME</name>